<reference key="1">
    <citation type="journal article" date="1999" name="Nature">
        <title>Evidence for lateral gene transfer between Archaea and Bacteria from genome sequence of Thermotoga maritima.</title>
        <authorList>
            <person name="Nelson K.E."/>
            <person name="Clayton R.A."/>
            <person name="Gill S.R."/>
            <person name="Gwinn M.L."/>
            <person name="Dodson R.J."/>
            <person name="Haft D.H."/>
            <person name="Hickey E.K."/>
            <person name="Peterson J.D."/>
            <person name="Nelson W.C."/>
            <person name="Ketchum K.A."/>
            <person name="McDonald L.A."/>
            <person name="Utterback T.R."/>
            <person name="Malek J.A."/>
            <person name="Linher K.D."/>
            <person name="Garrett M.M."/>
            <person name="Stewart A.M."/>
            <person name="Cotton M.D."/>
            <person name="Pratt M.S."/>
            <person name="Phillips C.A."/>
            <person name="Richardson D.L."/>
            <person name="Heidelberg J.F."/>
            <person name="Sutton G.G."/>
            <person name="Fleischmann R.D."/>
            <person name="Eisen J.A."/>
            <person name="White O."/>
            <person name="Salzberg S.L."/>
            <person name="Smith H.O."/>
            <person name="Venter J.C."/>
            <person name="Fraser C.M."/>
        </authorList>
    </citation>
    <scope>NUCLEOTIDE SEQUENCE [LARGE SCALE GENOMIC DNA]</scope>
    <source>
        <strain>ATCC 43589 / DSM 3109 / JCM 10099 / NBRC 100826 / MSB8</strain>
    </source>
</reference>
<name>TIG_THEMA</name>
<accession>Q9WZF8</accession>
<dbReference type="EC" id="5.2.1.8"/>
<dbReference type="EMBL" id="AE000512">
    <property type="protein sequence ID" value="AAD35776.1"/>
    <property type="molecule type" value="Genomic_DNA"/>
</dbReference>
<dbReference type="PIR" id="D72345">
    <property type="entry name" value="D72345"/>
</dbReference>
<dbReference type="RefSeq" id="NP_228503.1">
    <property type="nucleotide sequence ID" value="NC_000853.1"/>
</dbReference>
<dbReference type="RefSeq" id="WP_004081061.1">
    <property type="nucleotide sequence ID" value="NZ_CP011107.1"/>
</dbReference>
<dbReference type="PDB" id="2NSA">
    <property type="method" value="X-ray"/>
    <property type="resolution" value="1.70 A"/>
    <property type="chains" value="A=244-405"/>
</dbReference>
<dbReference type="PDB" id="2NSB">
    <property type="method" value="X-ray"/>
    <property type="resolution" value="3.20 A"/>
    <property type="chains" value="A=1-109"/>
</dbReference>
<dbReference type="PDB" id="2NSC">
    <property type="method" value="X-ray"/>
    <property type="resolution" value="2.20 A"/>
    <property type="chains" value="A=1-109"/>
</dbReference>
<dbReference type="PDB" id="3GTY">
    <property type="method" value="X-ray"/>
    <property type="resolution" value="3.40 A"/>
    <property type="chains" value="X=1-425"/>
</dbReference>
<dbReference type="PDB" id="3GU0">
    <property type="method" value="X-ray"/>
    <property type="resolution" value="3.50 A"/>
    <property type="chains" value="A=1-405"/>
</dbReference>
<dbReference type="PDB" id="6J0A">
    <property type="method" value="EM"/>
    <property type="resolution" value="14.20 A"/>
    <property type="chains" value="Q=1-405"/>
</dbReference>
<dbReference type="PDBsum" id="2NSA"/>
<dbReference type="PDBsum" id="2NSB"/>
<dbReference type="PDBsum" id="2NSC"/>
<dbReference type="PDBsum" id="3GTY"/>
<dbReference type="PDBsum" id="3GU0"/>
<dbReference type="PDBsum" id="6J0A"/>
<dbReference type="EMDB" id="EMD-9759"/>
<dbReference type="SMR" id="Q9WZF8"/>
<dbReference type="FunCoup" id="Q9WZF8">
    <property type="interactions" value="445"/>
</dbReference>
<dbReference type="IntAct" id="Q9WZF8">
    <property type="interactions" value="1"/>
</dbReference>
<dbReference type="STRING" id="243274.TM_0694"/>
<dbReference type="PaxDb" id="243274-THEMA_01195"/>
<dbReference type="DNASU" id="898361"/>
<dbReference type="EnsemblBacteria" id="AAD35776">
    <property type="protein sequence ID" value="AAD35776"/>
    <property type="gene ID" value="TM_0694"/>
</dbReference>
<dbReference type="KEGG" id="tma:TM0694"/>
<dbReference type="KEGG" id="tmi:THEMA_01195"/>
<dbReference type="KEGG" id="tmm:Tmari_0694"/>
<dbReference type="KEGG" id="tmw:THMA_0709"/>
<dbReference type="eggNOG" id="COG0544">
    <property type="taxonomic scope" value="Bacteria"/>
</dbReference>
<dbReference type="InParanoid" id="Q9WZF8"/>
<dbReference type="OrthoDB" id="9767721at2"/>
<dbReference type="EvolutionaryTrace" id="Q9WZF8"/>
<dbReference type="Proteomes" id="UP000008183">
    <property type="component" value="Chromosome"/>
</dbReference>
<dbReference type="GO" id="GO:0005737">
    <property type="term" value="C:cytoplasm"/>
    <property type="evidence" value="ECO:0007669"/>
    <property type="project" value="UniProtKB-SubCell"/>
</dbReference>
<dbReference type="GO" id="GO:0003677">
    <property type="term" value="F:DNA binding"/>
    <property type="evidence" value="ECO:0007669"/>
    <property type="project" value="InterPro"/>
</dbReference>
<dbReference type="GO" id="GO:0003755">
    <property type="term" value="F:peptidyl-prolyl cis-trans isomerase activity"/>
    <property type="evidence" value="ECO:0000318"/>
    <property type="project" value="GO_Central"/>
</dbReference>
<dbReference type="GO" id="GO:0044183">
    <property type="term" value="F:protein folding chaperone"/>
    <property type="evidence" value="ECO:0000318"/>
    <property type="project" value="GO_Central"/>
</dbReference>
<dbReference type="GO" id="GO:0043022">
    <property type="term" value="F:ribosome binding"/>
    <property type="evidence" value="ECO:0000318"/>
    <property type="project" value="GO_Central"/>
</dbReference>
<dbReference type="GO" id="GO:0051083">
    <property type="term" value="P:'de novo' cotranslational protein folding"/>
    <property type="evidence" value="ECO:0000318"/>
    <property type="project" value="GO_Central"/>
</dbReference>
<dbReference type="GO" id="GO:0051301">
    <property type="term" value="P:cell division"/>
    <property type="evidence" value="ECO:0007669"/>
    <property type="project" value="UniProtKB-KW"/>
</dbReference>
<dbReference type="GO" id="GO:0061077">
    <property type="term" value="P:chaperone-mediated protein folding"/>
    <property type="evidence" value="ECO:0000318"/>
    <property type="project" value="GO_Central"/>
</dbReference>
<dbReference type="GO" id="GO:0015031">
    <property type="term" value="P:protein transport"/>
    <property type="evidence" value="ECO:0007669"/>
    <property type="project" value="UniProtKB-UniRule"/>
</dbReference>
<dbReference type="GO" id="GO:0043335">
    <property type="term" value="P:protein unfolding"/>
    <property type="evidence" value="ECO:0000318"/>
    <property type="project" value="GO_Central"/>
</dbReference>
<dbReference type="GO" id="GO:0032784">
    <property type="term" value="P:regulation of DNA-templated transcription elongation"/>
    <property type="evidence" value="ECO:0007669"/>
    <property type="project" value="InterPro"/>
</dbReference>
<dbReference type="Gene3D" id="3.10.50.30">
    <property type="entry name" value="Transcription elongation factor, GreA/GreB, C-terminal domain"/>
    <property type="match status" value="1"/>
</dbReference>
<dbReference type="Gene3D" id="3.30.70.1050">
    <property type="entry name" value="Trigger factor ribosome-binding domain"/>
    <property type="match status" value="1"/>
</dbReference>
<dbReference type="Gene3D" id="1.10.3120.10">
    <property type="entry name" value="Trigger factor, C-terminal domain"/>
    <property type="match status" value="1"/>
</dbReference>
<dbReference type="HAMAP" id="MF_00303">
    <property type="entry name" value="Trigger_factor_Tig"/>
    <property type="match status" value="1"/>
</dbReference>
<dbReference type="InterPro" id="IPR036953">
    <property type="entry name" value="GreA/GreB_C_sf"/>
</dbReference>
<dbReference type="InterPro" id="IPR005215">
    <property type="entry name" value="Trig_fac"/>
</dbReference>
<dbReference type="InterPro" id="IPR008880">
    <property type="entry name" value="Trigger_fac_C"/>
</dbReference>
<dbReference type="InterPro" id="IPR037041">
    <property type="entry name" value="Trigger_fac_C_sf"/>
</dbReference>
<dbReference type="InterPro" id="IPR008881">
    <property type="entry name" value="Trigger_fac_ribosome-bd_bac"/>
</dbReference>
<dbReference type="InterPro" id="IPR036611">
    <property type="entry name" value="Trigger_fac_ribosome-bd_sf"/>
</dbReference>
<dbReference type="InterPro" id="IPR027304">
    <property type="entry name" value="Trigger_fact/SurA_dom_sf"/>
</dbReference>
<dbReference type="NCBIfam" id="TIGR00115">
    <property type="entry name" value="tig"/>
    <property type="match status" value="1"/>
</dbReference>
<dbReference type="Pfam" id="PF05698">
    <property type="entry name" value="Trigger_C"/>
    <property type="match status" value="1"/>
</dbReference>
<dbReference type="Pfam" id="PF05697">
    <property type="entry name" value="Trigger_N"/>
    <property type="match status" value="1"/>
</dbReference>
<dbReference type="PIRSF" id="PIRSF003095">
    <property type="entry name" value="Trigger_factor"/>
    <property type="match status" value="1"/>
</dbReference>
<dbReference type="SUPFAM" id="SSF54534">
    <property type="entry name" value="FKBP-like"/>
    <property type="match status" value="1"/>
</dbReference>
<dbReference type="SUPFAM" id="SSF109998">
    <property type="entry name" value="Triger factor/SurA peptide-binding domain-like"/>
    <property type="match status" value="1"/>
</dbReference>
<dbReference type="SUPFAM" id="SSF102735">
    <property type="entry name" value="Trigger factor ribosome-binding domain"/>
    <property type="match status" value="1"/>
</dbReference>
<feature type="chain" id="PRO_0000179452" description="Trigger factor">
    <location>
        <begin position="1"/>
        <end position="425"/>
    </location>
</feature>
<feature type="domain" description="PPIase FKBP-type">
    <location>
        <begin position="158"/>
        <end position="231"/>
    </location>
</feature>
<feature type="strand" evidence="4">
    <location>
        <begin position="2"/>
        <end position="9"/>
    </location>
</feature>
<feature type="strand" evidence="4">
    <location>
        <begin position="12"/>
        <end position="18"/>
    </location>
</feature>
<feature type="helix" evidence="4">
    <location>
        <begin position="21"/>
        <end position="36"/>
    </location>
</feature>
<feature type="strand" evidence="6">
    <location>
        <begin position="42"/>
        <end position="44"/>
    </location>
</feature>
<feature type="helix" evidence="4">
    <location>
        <begin position="51"/>
        <end position="58"/>
    </location>
</feature>
<feature type="helix" evidence="4">
    <location>
        <begin position="59"/>
        <end position="61"/>
    </location>
</feature>
<feature type="helix" evidence="4">
    <location>
        <begin position="62"/>
        <end position="71"/>
    </location>
</feature>
<feature type="helix" evidence="4">
    <location>
        <begin position="74"/>
        <end position="77"/>
    </location>
</feature>
<feature type="turn" evidence="4">
    <location>
        <begin position="78"/>
        <end position="80"/>
    </location>
</feature>
<feature type="strand" evidence="5">
    <location>
        <begin position="83"/>
        <end position="85"/>
    </location>
</feature>
<feature type="strand" evidence="5">
    <location>
        <begin position="88"/>
        <end position="94"/>
    </location>
</feature>
<feature type="strand" evidence="5">
    <location>
        <begin position="99"/>
        <end position="107"/>
    </location>
</feature>
<feature type="strand" evidence="5">
    <location>
        <begin position="110"/>
        <end position="112"/>
    </location>
</feature>
<feature type="helix" evidence="5">
    <location>
        <begin position="116"/>
        <end position="118"/>
    </location>
</feature>
<feature type="strand" evidence="5">
    <location>
        <begin position="119"/>
        <end position="124"/>
    </location>
</feature>
<feature type="helix" evidence="5">
    <location>
        <begin position="126"/>
        <end position="144"/>
    </location>
</feature>
<feature type="strand" evidence="5">
    <location>
        <begin position="148"/>
        <end position="150"/>
    </location>
</feature>
<feature type="strand" evidence="5">
    <location>
        <begin position="159"/>
        <end position="168"/>
    </location>
</feature>
<feature type="strand" evidence="5">
    <location>
        <begin position="174"/>
        <end position="183"/>
    </location>
</feature>
<feature type="helix" evidence="5">
    <location>
        <begin position="193"/>
        <end position="196"/>
    </location>
</feature>
<feature type="strand" evidence="5">
    <location>
        <begin position="204"/>
        <end position="211"/>
    </location>
</feature>
<feature type="strand" evidence="5">
    <location>
        <begin position="214"/>
        <end position="228"/>
    </location>
</feature>
<feature type="helix" evidence="5">
    <location>
        <begin position="235"/>
        <end position="239"/>
    </location>
</feature>
<feature type="strand" evidence="6">
    <location>
        <begin position="241"/>
        <end position="244"/>
    </location>
</feature>
<feature type="helix" evidence="3">
    <location>
        <begin position="248"/>
        <end position="254"/>
    </location>
</feature>
<feature type="helix" evidence="3">
    <location>
        <begin position="259"/>
        <end position="262"/>
    </location>
</feature>
<feature type="helix" evidence="3">
    <location>
        <begin position="267"/>
        <end position="278"/>
    </location>
</feature>
<feature type="helix" evidence="3">
    <location>
        <begin position="279"/>
        <end position="282"/>
    </location>
</feature>
<feature type="strand" evidence="5">
    <location>
        <begin position="284"/>
        <end position="286"/>
    </location>
</feature>
<feature type="helix" evidence="3">
    <location>
        <begin position="289"/>
        <end position="305"/>
    </location>
</feature>
<feature type="helix" evidence="3">
    <location>
        <begin position="309"/>
        <end position="314"/>
    </location>
</feature>
<feature type="helix" evidence="3">
    <location>
        <begin position="319"/>
        <end position="347"/>
    </location>
</feature>
<feature type="helix" evidence="3">
    <location>
        <begin position="353"/>
        <end position="367"/>
    </location>
</feature>
<feature type="helix" evidence="3">
    <location>
        <begin position="371"/>
        <end position="380"/>
    </location>
</feature>
<feature type="helix" evidence="3">
    <location>
        <begin position="382"/>
        <end position="402"/>
    </location>
</feature>
<feature type="strand" evidence="5">
    <location>
        <begin position="405"/>
        <end position="410"/>
    </location>
</feature>
<protein>
    <recommendedName>
        <fullName>Trigger factor</fullName>
        <shortName>TF</shortName>
        <ecNumber>5.2.1.8</ecNumber>
    </recommendedName>
    <alternativeName>
        <fullName>PPIase</fullName>
    </alternativeName>
</protein>
<proteinExistence type="evidence at protein level"/>
<sequence length="425" mass="49898">MEVKELERDKNRVVLEYVFGAEEIAQAEDKAVRYLNQRVEIPGFRKGRIPKNVLKMKLGEEFQEYTLDFLMDLIPDTLKDRKLILSPIVTERELKDVTARVVVEVHEEPEVRIGDISKIEVEKVDEEKVLEKYVERRIEDLRESHALLEPKEGPAEAGDLVRVNMEVYNEEGKKLTSREYEYVISEDEDRPFVKDLVGKKKGDVVEIEREYEGKKYTYKLEVEEVYKRTLPEIGDELAKSVNNEFETLEQLKESLKKEGKEIYDVEMKESMREQLLEKLPEIVEIEISDRTLEILVNEAINRLKREGRYEQIVSSYESEEKFREELKERILDDIKRDRVIEVLAQEKGISVNDEELEKEAEELAPFWGISPDRAKSLVKARQDLREELRWAILKRKVLDLLLQEVKVKVVEPKGEGDDSEGKEDN</sequence>
<comment type="function">
    <text evidence="1">Involved in protein export. Acts as a chaperone by maintaining the newly synthesized protein in an open conformation. Functions as a peptidyl-prolyl cis-trans isomerase (By similarity).</text>
</comment>
<comment type="catalytic activity">
    <reaction>
        <text>[protein]-peptidylproline (omega=180) = [protein]-peptidylproline (omega=0)</text>
        <dbReference type="Rhea" id="RHEA:16237"/>
        <dbReference type="Rhea" id="RHEA-COMP:10747"/>
        <dbReference type="Rhea" id="RHEA-COMP:10748"/>
        <dbReference type="ChEBI" id="CHEBI:83833"/>
        <dbReference type="ChEBI" id="CHEBI:83834"/>
        <dbReference type="EC" id="5.2.1.8"/>
    </reaction>
</comment>
<comment type="interaction">
    <interactant intactId="EBI-2463534">
        <id>Q9WZF8</id>
    </interactant>
    <interactant intactId="EBI-2463521">
        <id>P38526</id>
        <label>rpsG</label>
    </interactant>
    <organismsDiffer>false</organismsDiffer>
    <experiments>5</experiments>
</comment>
<comment type="subcellular location">
    <subcellularLocation>
        <location>Cytoplasm</location>
    </subcellularLocation>
    <text evidence="1">About half TF is bound to the ribosome near the polypeptide exit tunnel while the other half is free in the cytoplasm.</text>
</comment>
<comment type="domain">
    <text evidence="1">Consists of 3 domains; the N-terminus binds the ribosome, the middle domain has PPIase activity, while the C-terminus has intrinsic chaperone activity on its own.</text>
</comment>
<comment type="similarity">
    <text evidence="2">Belongs to the FKBP-type PPIase family. Tig subfamily.</text>
</comment>
<evidence type="ECO:0000250" key="1"/>
<evidence type="ECO:0000305" key="2"/>
<evidence type="ECO:0007829" key="3">
    <source>
        <dbReference type="PDB" id="2NSA"/>
    </source>
</evidence>
<evidence type="ECO:0007829" key="4">
    <source>
        <dbReference type="PDB" id="2NSC"/>
    </source>
</evidence>
<evidence type="ECO:0007829" key="5">
    <source>
        <dbReference type="PDB" id="3GTY"/>
    </source>
</evidence>
<evidence type="ECO:0007829" key="6">
    <source>
        <dbReference type="PDB" id="3GU0"/>
    </source>
</evidence>
<keyword id="KW-0002">3D-structure</keyword>
<keyword id="KW-0131">Cell cycle</keyword>
<keyword id="KW-0132">Cell division</keyword>
<keyword id="KW-0143">Chaperone</keyword>
<keyword id="KW-0963">Cytoplasm</keyword>
<keyword id="KW-0413">Isomerase</keyword>
<keyword id="KW-1185">Reference proteome</keyword>
<keyword id="KW-0697">Rotamase</keyword>
<organism>
    <name type="scientific">Thermotoga maritima (strain ATCC 43589 / DSM 3109 / JCM 10099 / NBRC 100826 / MSB8)</name>
    <dbReference type="NCBI Taxonomy" id="243274"/>
    <lineage>
        <taxon>Bacteria</taxon>
        <taxon>Thermotogati</taxon>
        <taxon>Thermotogota</taxon>
        <taxon>Thermotogae</taxon>
        <taxon>Thermotogales</taxon>
        <taxon>Thermotogaceae</taxon>
        <taxon>Thermotoga</taxon>
    </lineage>
</organism>
<gene>
    <name type="primary">tig</name>
    <name type="ordered locus">TM_0694</name>
</gene>